<proteinExistence type="evidence at transcript level"/>
<evidence type="ECO:0000250" key="1">
    <source>
        <dbReference type="UniProtKB" id="O00203"/>
    </source>
</evidence>
<evidence type="ECO:0000250" key="2">
    <source>
        <dbReference type="UniProtKB" id="Q9Z1T1"/>
    </source>
</evidence>
<evidence type="ECO:0000256" key="3">
    <source>
        <dbReference type="SAM" id="MobiDB-lite"/>
    </source>
</evidence>
<evidence type="ECO:0000305" key="4"/>
<feature type="chain" id="PRO_0000283801" description="AP-3 complex subunit beta-1">
    <location>
        <begin position="1"/>
        <end position="1084"/>
    </location>
</feature>
<feature type="region of interest" description="Disordered" evidence="3">
    <location>
        <begin position="1"/>
        <end position="26"/>
    </location>
</feature>
<feature type="region of interest" description="Disordered" evidence="3">
    <location>
        <begin position="663"/>
        <end position="800"/>
    </location>
</feature>
<feature type="compositionally biased region" description="Polar residues" evidence="3">
    <location>
        <begin position="1"/>
        <end position="11"/>
    </location>
</feature>
<feature type="compositionally biased region" description="Basic and acidic residues" evidence="3">
    <location>
        <begin position="666"/>
        <end position="677"/>
    </location>
</feature>
<feature type="compositionally biased region" description="Acidic residues" evidence="3">
    <location>
        <begin position="678"/>
        <end position="717"/>
    </location>
</feature>
<feature type="compositionally biased region" description="Low complexity" evidence="3">
    <location>
        <begin position="718"/>
        <end position="729"/>
    </location>
</feature>
<feature type="compositionally biased region" description="Basic and acidic residues" evidence="3">
    <location>
        <begin position="738"/>
        <end position="753"/>
    </location>
</feature>
<feature type="compositionally biased region" description="Low complexity" evidence="3">
    <location>
        <begin position="754"/>
        <end position="767"/>
    </location>
</feature>
<feature type="compositionally biased region" description="Acidic residues" evidence="3">
    <location>
        <begin position="768"/>
        <end position="781"/>
    </location>
</feature>
<feature type="compositionally biased region" description="Basic and acidic residues" evidence="3">
    <location>
        <begin position="782"/>
        <end position="800"/>
    </location>
</feature>
<feature type="modified residue" description="Phosphoserine" evidence="1">
    <location>
        <position position="276"/>
    </location>
</feature>
<feature type="modified residue" description="Phosphoserine" evidence="1">
    <location>
        <position position="609"/>
    </location>
</feature>
<feature type="modified residue" description="Phosphoserine" evidence="1">
    <location>
        <position position="742"/>
    </location>
</feature>
<keyword id="KW-0968">Cytoplasmic vesicle</keyword>
<keyword id="KW-0333">Golgi apparatus</keyword>
<keyword id="KW-0472">Membrane</keyword>
<keyword id="KW-0597">Phosphoprotein</keyword>
<keyword id="KW-0653">Protein transport</keyword>
<keyword id="KW-1185">Reference proteome</keyword>
<keyword id="KW-0813">Transport</keyword>
<organism>
    <name type="scientific">Bos taurus</name>
    <name type="common">Bovine</name>
    <dbReference type="NCBI Taxonomy" id="9913"/>
    <lineage>
        <taxon>Eukaryota</taxon>
        <taxon>Metazoa</taxon>
        <taxon>Chordata</taxon>
        <taxon>Craniata</taxon>
        <taxon>Vertebrata</taxon>
        <taxon>Euteleostomi</taxon>
        <taxon>Mammalia</taxon>
        <taxon>Eutheria</taxon>
        <taxon>Laurasiatheria</taxon>
        <taxon>Artiodactyla</taxon>
        <taxon>Ruminantia</taxon>
        <taxon>Pecora</taxon>
        <taxon>Bovidae</taxon>
        <taxon>Bovinae</taxon>
        <taxon>Bos</taxon>
    </lineage>
</organism>
<name>AP3B1_BOVIN</name>
<accession>Q32PG1</accession>
<dbReference type="EMBL" id="BC108129">
    <property type="protein sequence ID" value="AAI08130.1"/>
    <property type="molecule type" value="mRNA"/>
</dbReference>
<dbReference type="RefSeq" id="NP_001070002.1">
    <property type="nucleotide sequence ID" value="NM_001076534.1"/>
</dbReference>
<dbReference type="SMR" id="Q32PG1"/>
<dbReference type="BioGRID" id="612977">
    <property type="interactions" value="1"/>
</dbReference>
<dbReference type="FunCoup" id="Q32PG1">
    <property type="interactions" value="4050"/>
</dbReference>
<dbReference type="STRING" id="9913.ENSBTAP00000006605"/>
<dbReference type="PaxDb" id="9913-ENSBTAP00000006605"/>
<dbReference type="GeneID" id="767602"/>
<dbReference type="KEGG" id="bta:767602"/>
<dbReference type="CTD" id="8546"/>
<dbReference type="VEuPathDB" id="HostDB:ENSBTAG00000005016"/>
<dbReference type="eggNOG" id="KOG1060">
    <property type="taxonomic scope" value="Eukaryota"/>
</dbReference>
<dbReference type="HOGENOM" id="CLU_006320_3_1_1"/>
<dbReference type="InParanoid" id="Q32PG1"/>
<dbReference type="OMA" id="TFNPIDS"/>
<dbReference type="OrthoDB" id="302453at2759"/>
<dbReference type="TreeFam" id="TF314605"/>
<dbReference type="Reactome" id="R-BTA-432722">
    <property type="pathway name" value="Golgi Associated Vesicle Biogenesis"/>
</dbReference>
<dbReference type="Proteomes" id="UP000009136">
    <property type="component" value="Chromosome 10"/>
</dbReference>
<dbReference type="Bgee" id="ENSBTAG00000005016">
    <property type="expression patterns" value="Expressed in ileum and 105 other cell types or tissues"/>
</dbReference>
<dbReference type="GO" id="GO:0030123">
    <property type="term" value="C:AP-3 adaptor complex"/>
    <property type="evidence" value="ECO:0007669"/>
    <property type="project" value="InterPro"/>
</dbReference>
<dbReference type="GO" id="GO:1904115">
    <property type="term" value="C:axon cytoplasm"/>
    <property type="evidence" value="ECO:0007669"/>
    <property type="project" value="GOC"/>
</dbReference>
<dbReference type="GO" id="GO:0030131">
    <property type="term" value="C:clathrin adaptor complex"/>
    <property type="evidence" value="ECO:0007669"/>
    <property type="project" value="InterPro"/>
</dbReference>
<dbReference type="GO" id="GO:0030665">
    <property type="term" value="C:clathrin-coated vesicle membrane"/>
    <property type="evidence" value="ECO:0007669"/>
    <property type="project" value="UniProtKB-SubCell"/>
</dbReference>
<dbReference type="GO" id="GO:0005794">
    <property type="term" value="C:Golgi apparatus"/>
    <property type="evidence" value="ECO:0007669"/>
    <property type="project" value="UniProtKB-SubCell"/>
</dbReference>
<dbReference type="GO" id="GO:0008089">
    <property type="term" value="P:anterograde axonal transport"/>
    <property type="evidence" value="ECO:0000250"/>
    <property type="project" value="UniProtKB"/>
</dbReference>
<dbReference type="GO" id="GO:0048490">
    <property type="term" value="P:anterograde synaptic vesicle transport"/>
    <property type="evidence" value="ECO:0000250"/>
    <property type="project" value="UniProtKB"/>
</dbReference>
<dbReference type="GO" id="GO:0006886">
    <property type="term" value="P:intracellular protein transport"/>
    <property type="evidence" value="ECO:0007669"/>
    <property type="project" value="InterPro"/>
</dbReference>
<dbReference type="GO" id="GO:0016192">
    <property type="term" value="P:vesicle-mediated transport"/>
    <property type="evidence" value="ECO:0007669"/>
    <property type="project" value="InterPro"/>
</dbReference>
<dbReference type="Gene3D" id="1.25.10.10">
    <property type="entry name" value="Leucine-rich Repeat Variant"/>
    <property type="match status" value="1"/>
</dbReference>
<dbReference type="InterPro" id="IPR026740">
    <property type="entry name" value="AP3_beta"/>
</dbReference>
<dbReference type="InterPro" id="IPR056314">
    <property type="entry name" value="AP3B1/2_C"/>
</dbReference>
<dbReference type="InterPro" id="IPR029394">
    <property type="entry name" value="AP3B1_Ser"/>
</dbReference>
<dbReference type="InterPro" id="IPR029390">
    <property type="entry name" value="AP3B_C"/>
</dbReference>
<dbReference type="InterPro" id="IPR026739">
    <property type="entry name" value="AP_beta"/>
</dbReference>
<dbReference type="InterPro" id="IPR011989">
    <property type="entry name" value="ARM-like"/>
</dbReference>
<dbReference type="InterPro" id="IPR016024">
    <property type="entry name" value="ARM-type_fold"/>
</dbReference>
<dbReference type="InterPro" id="IPR015151">
    <property type="entry name" value="B-adaptin_app_sub_C"/>
</dbReference>
<dbReference type="InterPro" id="IPR002553">
    <property type="entry name" value="Clathrin/coatomer_adapt-like_N"/>
</dbReference>
<dbReference type="PANTHER" id="PTHR11134">
    <property type="entry name" value="ADAPTOR COMPLEX SUBUNIT BETA FAMILY MEMBER"/>
    <property type="match status" value="1"/>
</dbReference>
<dbReference type="Pfam" id="PF01602">
    <property type="entry name" value="Adaptin_N"/>
    <property type="match status" value="1"/>
</dbReference>
<dbReference type="Pfam" id="PF14796">
    <property type="entry name" value="AP3B1_C"/>
    <property type="match status" value="1"/>
</dbReference>
<dbReference type="Pfam" id="PF24080">
    <property type="entry name" value="AP3B1_C_2"/>
    <property type="match status" value="1"/>
</dbReference>
<dbReference type="Pfam" id="PF14797">
    <property type="entry name" value="SEEEED"/>
    <property type="match status" value="1"/>
</dbReference>
<dbReference type="PIRSF" id="PIRSF037096">
    <property type="entry name" value="AP3_complex_beta"/>
    <property type="match status" value="1"/>
</dbReference>
<dbReference type="SMART" id="SM01355">
    <property type="entry name" value="AP3B1_C"/>
    <property type="match status" value="1"/>
</dbReference>
<dbReference type="SMART" id="SM01020">
    <property type="entry name" value="B2-adapt-app_C"/>
    <property type="match status" value="1"/>
</dbReference>
<dbReference type="SUPFAM" id="SSF48371">
    <property type="entry name" value="ARM repeat"/>
    <property type="match status" value="1"/>
</dbReference>
<sequence>MSSNSFAYNEQSGGGEATELGQEATSTISPSGAFGLFSSDMKKNEDLKQMLESNKDSAKLDAMKRIVGMIAKGKNASELFPAVVKNVASKNIEIKKLVYVYLVRYAEEQQDLALLSISTFQRALKDPNQLIRASALRVLSSIRVPIIVPIMMLAIKEASADLSPYVRKNAAHAIQKLYSLDPEQKEMLIEIIEKLLKDKSTLVAGSVVMAFEEVCPDRIDLIHKNYRKLCNLLVDVEEWGQVVIIHMLTRYARTQFVSPWRQGDVLEDNEKDFYDSDEEQKEKADKRKRPYAMDPDHRLLIRNTKPLLQSRNAAVVMAVAQLYWHIAPKSEAGIISKSLVRLLRSSREVQYIVLQNIATMSIQRKGMFEPYLKSFYVRSTDATMIKILKLEILTNLANEANISTLLREFQTYVKSQDKQFAAATIQTIGRCATSITEVSDTCLNGLVCLLSNRDEIVVAESVVVIKKLLQMQPMQHGEIIKHMAKLLDSITVPVARASILWLIGENCERVPKIAPDVLRKTAKSFTSEDDLVKLQILNLGAKLYLTNSKQTKLLTQYILNLGKYDQNYDIRDRTRFIRQLIVPNEKSGALSKYAKKIFLAQKPAPLLESPFKDRDHFQLGTLSHTLNTKATGYLELSNWPEVAPDPSVRNVEVIELAKEWTPAGKAKKENPDKKFYSESEEEEDSSESSSDSESESGSESGEDEEDDRSGDSAEDSGESGSEPEAGKGRAATRSRARGRGDSKDVDKEKENSKTSESSSGESSSIEESSSDSESESESESESESRKVTKEKEKKTKQERNPLTKDVSLLDLDDFNLVSTPVALPTPALSPSLIADLEGLNLSATSSVISVSTPVFVPGKTHVLLHRMSGKGLAAHYFFPRQPCIFGDKMVSVQITLNNTTDQKIENIHVGGKKLPMGMQMHVFNPIESLEPAGSITVSMGIDFCDSTQTASFQLCTKDDCFSVNIQPPVGELLLPVAMSEKDFKKEQGMLSGMNETSTTIIAAPQNFASSVILQKIVNVANVGVVPSGQDNIHRFAAKTVHSGSLMLVTVELKEGSTAQLIINTEKTVIGSVLLRELKPVLSQG</sequence>
<gene>
    <name type="primary">AP3B1</name>
</gene>
<protein>
    <recommendedName>
        <fullName>AP-3 complex subunit beta-1</fullName>
    </recommendedName>
    <alternativeName>
        <fullName>Adaptor protein complex AP-3 subunit beta-1</fullName>
    </alternativeName>
    <alternativeName>
        <fullName>Adaptor-related protein complex 3 subunit beta-1</fullName>
    </alternativeName>
    <alternativeName>
        <fullName>Beta-3A-adaptin</fullName>
    </alternativeName>
    <alternativeName>
        <fullName>Clathrin assembly protein complex 3 beta-1 large chain</fullName>
    </alternativeName>
</protein>
<comment type="function">
    <text evidence="2">Subunit of non-clathrin- and clathrin-associated adaptor protein complex 3 (AP-3) that plays a role in protein sorting in the late-Golgi/trans-Golgi network (TGN) and/or endosomes. The AP complexes mediate both the recruitment of clathrin to membranes and the recognition of sorting signals within the cytosolic tails of transmembrane cargo molecules. AP-3 appears to be involved in the sorting of a subset of transmembrane proteins targeted to lysosomes and lysosome-related organelles. In concert with the BLOC-1 complex, AP-3 is required to target cargos into vesicles assembled at cell bodies for delivery into neurites and nerve terminals.</text>
</comment>
<comment type="subunit">
    <text evidence="1 2">Adaptor protein complex 3 (AP-3) is a heterotetramer composed of two large adaptins (delta-type subunit AP3D1 and beta-type subunit AP3B1 or AP3B2), a medium adaptin (mu-type subunit AP3M1 or AP3M2) and a small adaptin (sigma-type subunit APS1 or AP3S2) (By similarity). AP-3 associates with the BLOC-1 complex (By similarity). Interacts with KIF3A; interaction is direct; interaction is impaired by pyrophosphorylation of AP3B1 (By similarity).</text>
</comment>
<comment type="subcellular location">
    <subcellularLocation>
        <location evidence="1">Cytoplasmic vesicle</location>
        <location evidence="1">Clathrin-coated vesicle membrane</location>
        <topology evidence="1">Peripheral membrane protein</topology>
        <orientation evidence="1">Cytoplasmic side</orientation>
    </subcellularLocation>
    <subcellularLocation>
        <location evidence="1">Golgi apparatus</location>
    </subcellularLocation>
    <text evidence="1">Component of the coat surrounding the cytoplasmic face of coated vesicles located at the Golgi complex.</text>
</comment>
<comment type="PTM">
    <text evidence="1">Phosphorylated on serine residues.</text>
</comment>
<comment type="PTM">
    <text evidence="1">Pyrophosphorylation by 5-diphosphoinositol pentakisphosphate (5-IP7) impairs interaction with KIF3A. Serine pyrophosphorylation is achieved by Mg(2+)-dependent, but enzyme independent transfer of a beta-phosphate from a inositol pyrophosphate to a pre-phosphorylated serine residue.</text>
</comment>
<comment type="similarity">
    <text evidence="4">Belongs to the adaptor complexes large subunit family.</text>
</comment>
<reference key="1">
    <citation type="submission" date="2005-10" db="EMBL/GenBank/DDBJ databases">
        <authorList>
            <consortium name="NIH - Mammalian Gene Collection (MGC) project"/>
        </authorList>
    </citation>
    <scope>NUCLEOTIDE SEQUENCE [LARGE SCALE MRNA]</scope>
    <source>
        <strain>Hereford</strain>
        <tissue>Ascending colon</tissue>
    </source>
</reference>